<name>GLYA_THEVO</name>
<dbReference type="EC" id="2.1.2.-" evidence="1"/>
<dbReference type="EMBL" id="BA000011">
    <property type="protein sequence ID" value="BAB59188.1"/>
    <property type="molecule type" value="Genomic_DNA"/>
</dbReference>
<dbReference type="RefSeq" id="WP_010916304.1">
    <property type="nucleotide sequence ID" value="NC_002689.2"/>
</dbReference>
<dbReference type="SMR" id="Q97CQ5"/>
<dbReference type="STRING" id="273116.gene:9380811"/>
<dbReference type="PaxDb" id="273116-14324260"/>
<dbReference type="GeneID" id="1441533"/>
<dbReference type="KEGG" id="tvo:TVG0048225"/>
<dbReference type="eggNOG" id="arCOG00070">
    <property type="taxonomic scope" value="Archaea"/>
</dbReference>
<dbReference type="HOGENOM" id="CLU_022477_2_1_2"/>
<dbReference type="OrthoDB" id="5821at2157"/>
<dbReference type="PhylomeDB" id="Q97CQ5"/>
<dbReference type="UniPathway" id="UPA00288">
    <property type="reaction ID" value="UER01023"/>
</dbReference>
<dbReference type="Proteomes" id="UP000001017">
    <property type="component" value="Chromosome"/>
</dbReference>
<dbReference type="GO" id="GO:0005737">
    <property type="term" value="C:cytoplasm"/>
    <property type="evidence" value="ECO:0007669"/>
    <property type="project" value="UniProtKB-SubCell"/>
</dbReference>
<dbReference type="GO" id="GO:0004372">
    <property type="term" value="F:glycine hydroxymethyltransferase activity"/>
    <property type="evidence" value="ECO:0007669"/>
    <property type="project" value="UniProtKB-UniRule"/>
</dbReference>
<dbReference type="GO" id="GO:0030170">
    <property type="term" value="F:pyridoxal phosphate binding"/>
    <property type="evidence" value="ECO:0007669"/>
    <property type="project" value="UniProtKB-UniRule"/>
</dbReference>
<dbReference type="GO" id="GO:0019264">
    <property type="term" value="P:glycine biosynthetic process from serine"/>
    <property type="evidence" value="ECO:0007669"/>
    <property type="project" value="UniProtKB-UniRule"/>
</dbReference>
<dbReference type="GO" id="GO:0035999">
    <property type="term" value="P:tetrahydrofolate interconversion"/>
    <property type="evidence" value="ECO:0007669"/>
    <property type="project" value="InterPro"/>
</dbReference>
<dbReference type="CDD" id="cd00378">
    <property type="entry name" value="SHMT"/>
    <property type="match status" value="1"/>
</dbReference>
<dbReference type="FunFam" id="3.90.1150.10:FF:000114">
    <property type="entry name" value="Serine hydroxymethyltransferase"/>
    <property type="match status" value="1"/>
</dbReference>
<dbReference type="Gene3D" id="3.90.1150.10">
    <property type="entry name" value="Aspartate Aminotransferase, domain 1"/>
    <property type="match status" value="1"/>
</dbReference>
<dbReference type="Gene3D" id="3.40.640.10">
    <property type="entry name" value="Type I PLP-dependent aspartate aminotransferase-like (Major domain)"/>
    <property type="match status" value="1"/>
</dbReference>
<dbReference type="HAMAP" id="MF_00051">
    <property type="entry name" value="SHMT"/>
    <property type="match status" value="1"/>
</dbReference>
<dbReference type="InterPro" id="IPR015424">
    <property type="entry name" value="PyrdxlP-dep_Trfase"/>
</dbReference>
<dbReference type="InterPro" id="IPR015421">
    <property type="entry name" value="PyrdxlP-dep_Trfase_major"/>
</dbReference>
<dbReference type="InterPro" id="IPR015422">
    <property type="entry name" value="PyrdxlP-dep_Trfase_small"/>
</dbReference>
<dbReference type="InterPro" id="IPR001085">
    <property type="entry name" value="Ser_HO-MeTrfase"/>
</dbReference>
<dbReference type="InterPro" id="IPR049943">
    <property type="entry name" value="Ser_HO-MeTrfase-like"/>
</dbReference>
<dbReference type="InterPro" id="IPR019798">
    <property type="entry name" value="Ser_HO-MeTrfase_PLP_BS"/>
</dbReference>
<dbReference type="InterPro" id="IPR039429">
    <property type="entry name" value="SHMT-like_dom"/>
</dbReference>
<dbReference type="NCBIfam" id="NF000586">
    <property type="entry name" value="PRK00011.1"/>
    <property type="match status" value="1"/>
</dbReference>
<dbReference type="PANTHER" id="PTHR11680">
    <property type="entry name" value="SERINE HYDROXYMETHYLTRANSFERASE"/>
    <property type="match status" value="1"/>
</dbReference>
<dbReference type="PANTHER" id="PTHR11680:SF35">
    <property type="entry name" value="SERINE HYDROXYMETHYLTRANSFERASE 1"/>
    <property type="match status" value="1"/>
</dbReference>
<dbReference type="Pfam" id="PF00464">
    <property type="entry name" value="SHMT"/>
    <property type="match status" value="1"/>
</dbReference>
<dbReference type="PIRSF" id="PIRSF000412">
    <property type="entry name" value="SHMT"/>
    <property type="match status" value="1"/>
</dbReference>
<dbReference type="SUPFAM" id="SSF53383">
    <property type="entry name" value="PLP-dependent transferases"/>
    <property type="match status" value="1"/>
</dbReference>
<dbReference type="PROSITE" id="PS00096">
    <property type="entry name" value="SHMT"/>
    <property type="match status" value="1"/>
</dbReference>
<sequence length="426" mass="46751">MAYQDALSIRELAQQHNALFGDSVALIASENVMSPLAREVMISDLESRYAEGLPHHRYYQGNNFVDLIEDKTNELLSKLFKTEQTDPRPISGTNANSAAIYALAKPGDLVAVPALSGGGHISAAEFGILGMRGVRTISYPYDKNTMTVDPDEASKIIKREKPKVCLFGQSVFMFPVPLKEMKGAFDEVGCKVWYDGAHVLGLIAGRKFQDPLREGADIVTGSTHKTFPGPQHGVILGNTDSETWKSVRRAVFPGVLSNHHLNAMAALGITAAEELEFGEKYASDIIDNAKALAGELYSLGFKVLAEERGFTESHTMAVDVTQNGGGKYVAETLEASGIILNKNLLPWDDNKKSQNPSGIRIGVQEVTRTGMGKSEMKEIASLIYRAIVKKEEPSKIKEEVKDLKSSFRHVKYCYGDVDAYEYIKLI</sequence>
<accession>Q97CQ5</accession>
<comment type="function">
    <text evidence="1">Catalyzes the reversible interconversion of serine and glycine with a modified folate serving as the one-carbon carrier. Also exhibits a pteridine-independent aldolase activity toward beta-hydroxyamino acids, producing glycine and aldehydes, via a retro-aldol mechanism.</text>
</comment>
<comment type="cofactor">
    <cofactor evidence="1">
        <name>pyridoxal 5'-phosphate</name>
        <dbReference type="ChEBI" id="CHEBI:597326"/>
    </cofactor>
</comment>
<comment type="pathway">
    <text evidence="1">Amino-acid biosynthesis; glycine biosynthesis; glycine from L-serine: step 1/1.</text>
</comment>
<comment type="subunit">
    <text evidence="1">Homodimer.</text>
</comment>
<comment type="subcellular location">
    <subcellularLocation>
        <location evidence="1">Cytoplasm</location>
    </subcellularLocation>
</comment>
<comment type="similarity">
    <text evidence="1">Belongs to the SHMT family.</text>
</comment>
<evidence type="ECO:0000255" key="1">
    <source>
        <dbReference type="HAMAP-Rule" id="MF_00051"/>
    </source>
</evidence>
<reference key="1">
    <citation type="journal article" date="2000" name="Proc. Natl. Acad. Sci. U.S.A.">
        <title>Archaeal adaptation to higher temperatures revealed by genomic sequence of Thermoplasma volcanium.</title>
        <authorList>
            <person name="Kawashima T."/>
            <person name="Amano N."/>
            <person name="Koike H."/>
            <person name="Makino S."/>
            <person name="Higuchi S."/>
            <person name="Kawashima-Ohya Y."/>
            <person name="Watanabe K."/>
            <person name="Yamazaki M."/>
            <person name="Kanehori K."/>
            <person name="Kawamoto T."/>
            <person name="Nunoshiba T."/>
            <person name="Yamamoto Y."/>
            <person name="Aramaki H."/>
            <person name="Makino K."/>
            <person name="Suzuki M."/>
        </authorList>
    </citation>
    <scope>NUCLEOTIDE SEQUENCE [LARGE SCALE GENOMIC DNA]</scope>
    <source>
        <strain>ATCC 51530 / DSM 4299 / JCM 9571 / NBRC 15438 / GSS1</strain>
    </source>
</reference>
<organism>
    <name type="scientific">Thermoplasma volcanium (strain ATCC 51530 / DSM 4299 / JCM 9571 / NBRC 15438 / GSS1)</name>
    <dbReference type="NCBI Taxonomy" id="273116"/>
    <lineage>
        <taxon>Archaea</taxon>
        <taxon>Methanobacteriati</taxon>
        <taxon>Thermoplasmatota</taxon>
        <taxon>Thermoplasmata</taxon>
        <taxon>Thermoplasmatales</taxon>
        <taxon>Thermoplasmataceae</taxon>
        <taxon>Thermoplasma</taxon>
    </lineage>
</organism>
<protein>
    <recommendedName>
        <fullName evidence="1">Serine hydroxymethyltransferase</fullName>
        <shortName evidence="1">SHMT</shortName>
        <shortName evidence="1">Serine methylase</shortName>
        <ecNumber evidence="1">2.1.2.-</ecNumber>
    </recommendedName>
</protein>
<keyword id="KW-0028">Amino-acid biosynthesis</keyword>
<keyword id="KW-0963">Cytoplasm</keyword>
<keyword id="KW-0554">One-carbon metabolism</keyword>
<keyword id="KW-0663">Pyridoxal phosphate</keyword>
<keyword id="KW-0808">Transferase</keyword>
<feature type="chain" id="PRO_0000113728" description="Serine hydroxymethyltransferase">
    <location>
        <begin position="1"/>
        <end position="426"/>
    </location>
</feature>
<feature type="binding site" evidence="1">
    <location>
        <position position="115"/>
    </location>
    <ligand>
        <name>(6S)-5,6,7,8-tetrahydrofolate</name>
        <dbReference type="ChEBI" id="CHEBI:57453"/>
    </ligand>
</feature>
<feature type="binding site" evidence="1">
    <location>
        <begin position="119"/>
        <end position="121"/>
    </location>
    <ligand>
        <name>(6S)-5,6,7,8-tetrahydrofolate</name>
        <dbReference type="ChEBI" id="CHEBI:57453"/>
    </ligand>
</feature>
<feature type="site" description="Plays an important role in substrate specificity" evidence="1">
    <location>
        <position position="224"/>
    </location>
</feature>
<feature type="modified residue" description="N6-(pyridoxal phosphate)lysine" evidence="1">
    <location>
        <position position="225"/>
    </location>
</feature>
<proteinExistence type="inferred from homology"/>
<gene>
    <name evidence="1" type="primary">glyA</name>
    <name type="ordered locus">TV0046</name>
    <name type="ORF">TVG0048225</name>
</gene>